<proteinExistence type="evidence at transcript level"/>
<accession>Q16960</accession>
<keyword id="KW-0966">Cell projection</keyword>
<keyword id="KW-0969">Cilium</keyword>
<keyword id="KW-0963">Cytoplasm</keyword>
<keyword id="KW-0206">Cytoskeleton</keyword>
<keyword id="KW-0243">Dynein</keyword>
<keyword id="KW-0493">Microtubule</keyword>
<keyword id="KW-0505">Motor protein</keyword>
<keyword id="KW-0677">Repeat</keyword>
<keyword id="KW-0853">WD repeat</keyword>
<feature type="chain" id="PRO_0000114664" description="Dynein intermediate chain 3, ciliary">
    <location>
        <begin position="1"/>
        <end position="597"/>
    </location>
</feature>
<feature type="repeat" description="WD 1">
    <location>
        <begin position="159"/>
        <end position="210"/>
    </location>
</feature>
<feature type="repeat" description="WD 2">
    <location>
        <begin position="213"/>
        <end position="253"/>
    </location>
</feature>
<feature type="repeat" description="WD 3">
    <location>
        <begin position="260"/>
        <end position="301"/>
    </location>
</feature>
<feature type="repeat" description="WD 4">
    <location>
        <begin position="314"/>
        <end position="354"/>
    </location>
</feature>
<feature type="repeat" description="WD 5">
    <location>
        <begin position="361"/>
        <end position="400"/>
    </location>
</feature>
<feature type="repeat" description="WD 6">
    <location>
        <begin position="404"/>
        <end position="444"/>
    </location>
</feature>
<feature type="repeat" description="WD 7">
    <location>
        <begin position="449"/>
        <end position="488"/>
    </location>
</feature>
<feature type="region of interest" description="Disordered" evidence="1">
    <location>
        <begin position="512"/>
        <end position="546"/>
    </location>
</feature>
<feature type="region of interest" description="Disordered" evidence="1">
    <location>
        <begin position="562"/>
        <end position="597"/>
    </location>
</feature>
<feature type="compositionally biased region" description="Acidic residues" evidence="1">
    <location>
        <begin position="528"/>
        <end position="542"/>
    </location>
</feature>
<feature type="compositionally biased region" description="Basic and acidic residues" evidence="1">
    <location>
        <begin position="584"/>
        <end position="597"/>
    </location>
</feature>
<reference key="1">
    <citation type="journal article" date="1995" name="Mol. Biol. Cell">
        <title>Interspecies conservation of outer arm dynein intermediate chain sequences defines two intermediate chain subclasses.</title>
        <authorList>
            <person name="Ogawa K."/>
            <person name="Kamiya R."/>
            <person name="Wilkerson C.G."/>
            <person name="Witman G.B."/>
        </authorList>
    </citation>
    <scope>NUCLEOTIDE SEQUENCE [MRNA]</scope>
    <source>
        <tissue>Egg</tissue>
    </source>
</reference>
<organism>
    <name type="scientific">Heliocidaris crassispina</name>
    <name type="common">Sea urchin</name>
    <name type="synonym">Anthocidaris crassispina</name>
    <dbReference type="NCBI Taxonomy" id="1043166"/>
    <lineage>
        <taxon>Eukaryota</taxon>
        <taxon>Metazoa</taxon>
        <taxon>Echinodermata</taxon>
        <taxon>Eleutherozoa</taxon>
        <taxon>Echinozoa</taxon>
        <taxon>Echinoidea</taxon>
        <taxon>Euechinoidea</taxon>
        <taxon>Echinacea</taxon>
        <taxon>Camarodonta</taxon>
        <taxon>Echinidea</taxon>
        <taxon>Echinometridae</taxon>
        <taxon>Heliocidaris</taxon>
    </lineage>
</organism>
<sequence length="597" mass="68225">MEIVYVYTKKRSEFGRQCNFSDRPAELHVDILPDESLLSNFIEKNPVDRGIQCVQEMSEHEINTERFETDSRGINHMEGGWPKDINPQEVEQVLRFRKKVEKDESYVTTIQNLASSMEHTIKQNNAIDIYEDYFADLEIEEVEETPSAKTINVFRDPNEIKRPATHLSWYPDGPKKLAVAYSSLEFQKTSAETSMDSYIWDIENPNKPEFVLKPVSPLVCLEYNPKDVHVLIGGCYNGQVAFWDTRKGSQAVEMSPVEHSHHDPVYKTIWLQSKTGTECFSASTDGQVLWWDMRKLGEPTEKLIMDPSKKGKMENAQGVISLEYEPTIPTKFMVGTEQGTIISCNRKAKTPPEKIVAIYKEHIGPVYSLQRNPFFPKNFLTVGDWTARIWSEDIRDSSIMWTKYHMSYLTDGCWSPVRPAVFFTTKMDGSLDVWDYLFKQKDPTLSLQVSDDALHSLRVQDQGRLIATGSNSGTTTLLELSSGLCTMQRNEKALVTAMFERETKREKILESRQRELRLKRQGASAQGQDDDEEGGPDEEEDLVAAAEKEFFQIVQADKKKFAAQQAKLSEQDNKIIEEAEENNGSEKKDTENGEKEG</sequence>
<dbReference type="EMBL" id="D28863">
    <property type="protein sequence ID" value="BAA06013.1"/>
    <property type="molecule type" value="mRNA"/>
</dbReference>
<dbReference type="SMR" id="Q16960"/>
<dbReference type="GO" id="GO:0005874">
    <property type="term" value="C:microtubule"/>
    <property type="evidence" value="ECO:0007669"/>
    <property type="project" value="UniProtKB-KW"/>
</dbReference>
<dbReference type="GO" id="GO:0036157">
    <property type="term" value="C:outer dynein arm"/>
    <property type="evidence" value="ECO:0007669"/>
    <property type="project" value="TreeGrafter"/>
</dbReference>
<dbReference type="GO" id="GO:0045504">
    <property type="term" value="F:dynein heavy chain binding"/>
    <property type="evidence" value="ECO:0007669"/>
    <property type="project" value="TreeGrafter"/>
</dbReference>
<dbReference type="GO" id="GO:0045503">
    <property type="term" value="F:dynein light chain binding"/>
    <property type="evidence" value="ECO:0007669"/>
    <property type="project" value="TreeGrafter"/>
</dbReference>
<dbReference type="GO" id="GO:0003341">
    <property type="term" value="P:cilium movement"/>
    <property type="evidence" value="ECO:0007669"/>
    <property type="project" value="TreeGrafter"/>
</dbReference>
<dbReference type="GO" id="GO:0036158">
    <property type="term" value="P:outer dynein arm assembly"/>
    <property type="evidence" value="ECO:0007669"/>
    <property type="project" value="TreeGrafter"/>
</dbReference>
<dbReference type="FunFam" id="2.130.10.10:FF:000371">
    <property type="entry name" value="dynein intermediate chain 2, axonemal"/>
    <property type="match status" value="1"/>
</dbReference>
<dbReference type="FunFam" id="2.130.10.10:FF:001723">
    <property type="entry name" value="Dynein intermediate chain 3, ciliary"/>
    <property type="match status" value="1"/>
</dbReference>
<dbReference type="Gene3D" id="2.130.10.10">
    <property type="entry name" value="YVTN repeat-like/Quinoprotein amine dehydrogenase"/>
    <property type="match status" value="2"/>
</dbReference>
<dbReference type="InterPro" id="IPR050687">
    <property type="entry name" value="Dynein_IC"/>
</dbReference>
<dbReference type="InterPro" id="IPR015943">
    <property type="entry name" value="WD40/YVTN_repeat-like_dom_sf"/>
</dbReference>
<dbReference type="InterPro" id="IPR036322">
    <property type="entry name" value="WD40_repeat_dom_sf"/>
</dbReference>
<dbReference type="InterPro" id="IPR001680">
    <property type="entry name" value="WD40_rpt"/>
</dbReference>
<dbReference type="PANTHER" id="PTHR12442:SF7">
    <property type="entry name" value="DYNEIN AXONEMAL INTERMEDIATE CHAIN 2"/>
    <property type="match status" value="1"/>
</dbReference>
<dbReference type="PANTHER" id="PTHR12442">
    <property type="entry name" value="DYNEIN INTERMEDIATE CHAIN"/>
    <property type="match status" value="1"/>
</dbReference>
<dbReference type="SMART" id="SM00320">
    <property type="entry name" value="WD40"/>
    <property type="match status" value="5"/>
</dbReference>
<dbReference type="SUPFAM" id="SSF50978">
    <property type="entry name" value="WD40 repeat-like"/>
    <property type="match status" value="1"/>
</dbReference>
<dbReference type="PROSITE" id="PS00678">
    <property type="entry name" value="WD_REPEATS_1"/>
    <property type="match status" value="1"/>
</dbReference>
<dbReference type="PROSITE" id="PS50294">
    <property type="entry name" value="WD_REPEATS_REGION"/>
    <property type="match status" value="1"/>
</dbReference>
<protein>
    <recommendedName>
        <fullName>Dynein intermediate chain 3, ciliary</fullName>
    </recommendedName>
</protein>
<comment type="function">
    <text>May play a role in the regulation of dynein heavy chain activity.</text>
</comment>
<comment type="subunit">
    <text>Consists of at least two heavy chains (alpha and beta), three intermediate chains and several light chains.</text>
</comment>
<comment type="subcellular location">
    <subcellularLocation>
        <location>Cytoplasm</location>
        <location>Cytoskeleton</location>
        <location>Cilium axoneme</location>
    </subcellularLocation>
</comment>
<comment type="similarity">
    <text evidence="2">Belongs to the dynein intermediate chain family.</text>
</comment>
<name>DYI3_HELCR</name>
<evidence type="ECO:0000256" key="1">
    <source>
        <dbReference type="SAM" id="MobiDB-lite"/>
    </source>
</evidence>
<evidence type="ECO:0000305" key="2"/>